<reference key="1">
    <citation type="journal article" date="2002" name="Nucleic Acids Res.">
        <title>Genome sequence of Oceanobacillus iheyensis isolated from the Iheya Ridge and its unexpected adaptive capabilities to extreme environments.</title>
        <authorList>
            <person name="Takami H."/>
            <person name="Takaki Y."/>
            <person name="Uchiyama I."/>
        </authorList>
    </citation>
    <scope>NUCLEOTIDE SEQUENCE [LARGE SCALE GENOMIC DNA]</scope>
    <source>
        <strain>DSM 14371 / CIP 107618 / JCM 11309 / KCTC 3954 / HTE831</strain>
    </source>
</reference>
<dbReference type="EC" id="4.2.1.33" evidence="1"/>
<dbReference type="EMBL" id="BA000028">
    <property type="protein sequence ID" value="BAC14573.1"/>
    <property type="molecule type" value="Genomic_DNA"/>
</dbReference>
<dbReference type="RefSeq" id="WP_011067010.1">
    <property type="nucleotide sequence ID" value="NC_004193.1"/>
</dbReference>
<dbReference type="SMR" id="Q8EN70"/>
<dbReference type="STRING" id="221109.gene:10734869"/>
<dbReference type="KEGG" id="oih:OB2617"/>
<dbReference type="eggNOG" id="COG0066">
    <property type="taxonomic scope" value="Bacteria"/>
</dbReference>
<dbReference type="HOGENOM" id="CLU_081378_0_3_9"/>
<dbReference type="OrthoDB" id="9777465at2"/>
<dbReference type="PhylomeDB" id="Q8EN70"/>
<dbReference type="UniPathway" id="UPA00048">
    <property type="reaction ID" value="UER00071"/>
</dbReference>
<dbReference type="Proteomes" id="UP000000822">
    <property type="component" value="Chromosome"/>
</dbReference>
<dbReference type="GO" id="GO:0009316">
    <property type="term" value="C:3-isopropylmalate dehydratase complex"/>
    <property type="evidence" value="ECO:0007669"/>
    <property type="project" value="InterPro"/>
</dbReference>
<dbReference type="GO" id="GO:0003861">
    <property type="term" value="F:3-isopropylmalate dehydratase activity"/>
    <property type="evidence" value="ECO:0007669"/>
    <property type="project" value="UniProtKB-UniRule"/>
</dbReference>
<dbReference type="GO" id="GO:0009098">
    <property type="term" value="P:L-leucine biosynthetic process"/>
    <property type="evidence" value="ECO:0007669"/>
    <property type="project" value="UniProtKB-UniRule"/>
</dbReference>
<dbReference type="CDD" id="cd01577">
    <property type="entry name" value="IPMI_Swivel"/>
    <property type="match status" value="1"/>
</dbReference>
<dbReference type="FunFam" id="3.20.19.10:FF:000003">
    <property type="entry name" value="3-isopropylmalate dehydratase small subunit"/>
    <property type="match status" value="1"/>
</dbReference>
<dbReference type="Gene3D" id="3.20.19.10">
    <property type="entry name" value="Aconitase, domain 4"/>
    <property type="match status" value="1"/>
</dbReference>
<dbReference type="HAMAP" id="MF_01031">
    <property type="entry name" value="LeuD_type1"/>
    <property type="match status" value="1"/>
</dbReference>
<dbReference type="InterPro" id="IPR004431">
    <property type="entry name" value="3-IsopropMal_deHydase_ssu"/>
</dbReference>
<dbReference type="InterPro" id="IPR015928">
    <property type="entry name" value="Aconitase/3IPM_dehydase_swvl"/>
</dbReference>
<dbReference type="InterPro" id="IPR000573">
    <property type="entry name" value="AconitaseA/IPMdHydase_ssu_swvl"/>
</dbReference>
<dbReference type="InterPro" id="IPR033940">
    <property type="entry name" value="IPMI_Swivel"/>
</dbReference>
<dbReference type="InterPro" id="IPR050075">
    <property type="entry name" value="LeuD"/>
</dbReference>
<dbReference type="NCBIfam" id="TIGR00171">
    <property type="entry name" value="leuD"/>
    <property type="match status" value="1"/>
</dbReference>
<dbReference type="NCBIfam" id="NF002458">
    <property type="entry name" value="PRK01641.1"/>
    <property type="match status" value="1"/>
</dbReference>
<dbReference type="PANTHER" id="PTHR43345:SF5">
    <property type="entry name" value="3-ISOPROPYLMALATE DEHYDRATASE SMALL SUBUNIT"/>
    <property type="match status" value="1"/>
</dbReference>
<dbReference type="PANTHER" id="PTHR43345">
    <property type="entry name" value="3-ISOPROPYLMALATE DEHYDRATASE SMALL SUBUNIT 2-RELATED-RELATED"/>
    <property type="match status" value="1"/>
</dbReference>
<dbReference type="Pfam" id="PF00694">
    <property type="entry name" value="Aconitase_C"/>
    <property type="match status" value="1"/>
</dbReference>
<dbReference type="SUPFAM" id="SSF52016">
    <property type="entry name" value="LeuD/IlvD-like"/>
    <property type="match status" value="1"/>
</dbReference>
<proteinExistence type="inferred from homology"/>
<organism>
    <name type="scientific">Oceanobacillus iheyensis (strain DSM 14371 / CIP 107618 / JCM 11309 / KCTC 3954 / HTE831)</name>
    <dbReference type="NCBI Taxonomy" id="221109"/>
    <lineage>
        <taxon>Bacteria</taxon>
        <taxon>Bacillati</taxon>
        <taxon>Bacillota</taxon>
        <taxon>Bacilli</taxon>
        <taxon>Bacillales</taxon>
        <taxon>Bacillaceae</taxon>
        <taxon>Oceanobacillus</taxon>
    </lineage>
</organism>
<sequence length="192" mass="21761">MEPLEFHSGKVCPLNRANVDTDQIIPKQFLKRIERTGFGQFLFFHWRFNDDGTERSDFVLNDPDYKGSSILVAGDNFGCGSSREHAPWALADYGFKVIIAPDFADIFYNNALKNGILVIKMDEQQVKSWMQKAVDGLTLDVDLKQQTIQASDGTITSFDITPYQREKLINGWDDIALTLLKEEKIAAYESAN</sequence>
<name>LEUD_OCEIH</name>
<accession>Q8EN70</accession>
<feature type="chain" id="PRO_0000141850" description="3-isopropylmalate dehydratase small subunit">
    <location>
        <begin position="1"/>
        <end position="192"/>
    </location>
</feature>
<protein>
    <recommendedName>
        <fullName evidence="1">3-isopropylmalate dehydratase small subunit</fullName>
        <ecNumber evidence="1">4.2.1.33</ecNumber>
    </recommendedName>
    <alternativeName>
        <fullName evidence="1">Alpha-IPM isomerase</fullName>
        <shortName evidence="1">IPMI</shortName>
    </alternativeName>
    <alternativeName>
        <fullName evidence="1">Isopropylmalate isomerase</fullName>
    </alternativeName>
</protein>
<gene>
    <name evidence="1" type="primary">leuD</name>
    <name type="ordered locus">OB2617</name>
</gene>
<keyword id="KW-0028">Amino-acid biosynthesis</keyword>
<keyword id="KW-0100">Branched-chain amino acid biosynthesis</keyword>
<keyword id="KW-0432">Leucine biosynthesis</keyword>
<keyword id="KW-0456">Lyase</keyword>
<keyword id="KW-1185">Reference proteome</keyword>
<evidence type="ECO:0000255" key="1">
    <source>
        <dbReference type="HAMAP-Rule" id="MF_01031"/>
    </source>
</evidence>
<comment type="function">
    <text evidence="1">Catalyzes the isomerization between 2-isopropylmalate and 3-isopropylmalate, via the formation of 2-isopropylmaleate.</text>
</comment>
<comment type="catalytic activity">
    <reaction evidence="1">
        <text>(2R,3S)-3-isopropylmalate = (2S)-2-isopropylmalate</text>
        <dbReference type="Rhea" id="RHEA:32287"/>
        <dbReference type="ChEBI" id="CHEBI:1178"/>
        <dbReference type="ChEBI" id="CHEBI:35121"/>
        <dbReference type="EC" id="4.2.1.33"/>
    </reaction>
</comment>
<comment type="pathway">
    <text evidence="1">Amino-acid biosynthesis; L-leucine biosynthesis; L-leucine from 3-methyl-2-oxobutanoate: step 2/4.</text>
</comment>
<comment type="subunit">
    <text evidence="1">Heterodimer of LeuC and LeuD.</text>
</comment>
<comment type="similarity">
    <text evidence="1">Belongs to the LeuD family. LeuD type 1 subfamily.</text>
</comment>